<dbReference type="EMBL" id="CP000053">
    <property type="protein sequence ID" value="AAY61133.1"/>
    <property type="molecule type" value="Genomic_DNA"/>
</dbReference>
<dbReference type="SMR" id="Q4UMS5"/>
<dbReference type="STRING" id="315456.RF_0282"/>
<dbReference type="KEGG" id="rfe:RF_0282"/>
<dbReference type="eggNOG" id="COG0185">
    <property type="taxonomic scope" value="Bacteria"/>
</dbReference>
<dbReference type="HOGENOM" id="CLU_144911_0_1_5"/>
<dbReference type="OrthoDB" id="9797833at2"/>
<dbReference type="Proteomes" id="UP000008548">
    <property type="component" value="Chromosome"/>
</dbReference>
<dbReference type="GO" id="GO:0005737">
    <property type="term" value="C:cytoplasm"/>
    <property type="evidence" value="ECO:0007669"/>
    <property type="project" value="UniProtKB-ARBA"/>
</dbReference>
<dbReference type="GO" id="GO:0015935">
    <property type="term" value="C:small ribosomal subunit"/>
    <property type="evidence" value="ECO:0007669"/>
    <property type="project" value="InterPro"/>
</dbReference>
<dbReference type="GO" id="GO:0019843">
    <property type="term" value="F:rRNA binding"/>
    <property type="evidence" value="ECO:0007669"/>
    <property type="project" value="UniProtKB-UniRule"/>
</dbReference>
<dbReference type="GO" id="GO:0003735">
    <property type="term" value="F:structural constituent of ribosome"/>
    <property type="evidence" value="ECO:0007669"/>
    <property type="project" value="InterPro"/>
</dbReference>
<dbReference type="GO" id="GO:0000028">
    <property type="term" value="P:ribosomal small subunit assembly"/>
    <property type="evidence" value="ECO:0007669"/>
    <property type="project" value="TreeGrafter"/>
</dbReference>
<dbReference type="GO" id="GO:0006412">
    <property type="term" value="P:translation"/>
    <property type="evidence" value="ECO:0007669"/>
    <property type="project" value="UniProtKB-UniRule"/>
</dbReference>
<dbReference type="FunFam" id="3.30.860.10:FF:000001">
    <property type="entry name" value="30S ribosomal protein S19"/>
    <property type="match status" value="1"/>
</dbReference>
<dbReference type="Gene3D" id="3.30.860.10">
    <property type="entry name" value="30s Ribosomal Protein S19, Chain A"/>
    <property type="match status" value="1"/>
</dbReference>
<dbReference type="HAMAP" id="MF_00531">
    <property type="entry name" value="Ribosomal_uS19"/>
    <property type="match status" value="1"/>
</dbReference>
<dbReference type="InterPro" id="IPR002222">
    <property type="entry name" value="Ribosomal_uS19"/>
</dbReference>
<dbReference type="InterPro" id="IPR005732">
    <property type="entry name" value="Ribosomal_uS19_bac-type"/>
</dbReference>
<dbReference type="InterPro" id="IPR020934">
    <property type="entry name" value="Ribosomal_uS19_CS"/>
</dbReference>
<dbReference type="InterPro" id="IPR023575">
    <property type="entry name" value="Ribosomal_uS19_SF"/>
</dbReference>
<dbReference type="NCBIfam" id="TIGR01050">
    <property type="entry name" value="rpsS_bact"/>
    <property type="match status" value="1"/>
</dbReference>
<dbReference type="PANTHER" id="PTHR11880">
    <property type="entry name" value="RIBOSOMAL PROTEIN S19P FAMILY MEMBER"/>
    <property type="match status" value="1"/>
</dbReference>
<dbReference type="PANTHER" id="PTHR11880:SF8">
    <property type="entry name" value="SMALL RIBOSOMAL SUBUNIT PROTEIN US19M"/>
    <property type="match status" value="1"/>
</dbReference>
<dbReference type="Pfam" id="PF00203">
    <property type="entry name" value="Ribosomal_S19"/>
    <property type="match status" value="1"/>
</dbReference>
<dbReference type="PIRSF" id="PIRSF002144">
    <property type="entry name" value="Ribosomal_S19"/>
    <property type="match status" value="1"/>
</dbReference>
<dbReference type="PRINTS" id="PR00975">
    <property type="entry name" value="RIBOSOMALS19"/>
</dbReference>
<dbReference type="SUPFAM" id="SSF54570">
    <property type="entry name" value="Ribosomal protein S19"/>
    <property type="match status" value="1"/>
</dbReference>
<dbReference type="PROSITE" id="PS00323">
    <property type="entry name" value="RIBOSOMAL_S19"/>
    <property type="match status" value="1"/>
</dbReference>
<feature type="chain" id="PRO_0000265420" description="Small ribosomal subunit protein uS19">
    <location>
        <begin position="1"/>
        <end position="92"/>
    </location>
</feature>
<sequence length="92" mass="10496">MARSIWKGPFVDGYLIKKVQKLMESGKSEMIKTWSRRSTILPIFVGFTFSVHNGNKFIPVSVNEEMVGRKLGEFAPTRTFHGHGADKKVKRK</sequence>
<protein>
    <recommendedName>
        <fullName evidence="1">Small ribosomal subunit protein uS19</fullName>
    </recommendedName>
    <alternativeName>
        <fullName evidence="2">30S ribosomal protein S19</fullName>
    </alternativeName>
</protein>
<evidence type="ECO:0000255" key="1">
    <source>
        <dbReference type="HAMAP-Rule" id="MF_00531"/>
    </source>
</evidence>
<evidence type="ECO:0000305" key="2"/>
<reference key="1">
    <citation type="journal article" date="2005" name="PLoS Biol.">
        <title>The genome sequence of Rickettsia felis identifies the first putative conjugative plasmid in an obligate intracellular parasite.</title>
        <authorList>
            <person name="Ogata H."/>
            <person name="Renesto P."/>
            <person name="Audic S."/>
            <person name="Robert C."/>
            <person name="Blanc G."/>
            <person name="Fournier P.-E."/>
            <person name="Parinello H."/>
            <person name="Claverie J.-M."/>
            <person name="Raoult D."/>
        </authorList>
    </citation>
    <scope>NUCLEOTIDE SEQUENCE [LARGE SCALE GENOMIC DNA]</scope>
    <source>
        <strain>ATCC VR-1525 / URRWXCal2</strain>
    </source>
</reference>
<proteinExistence type="inferred from homology"/>
<name>RS19_RICFE</name>
<organism>
    <name type="scientific">Rickettsia felis (strain ATCC VR-1525 / URRWXCal2)</name>
    <name type="common">Rickettsia azadi</name>
    <dbReference type="NCBI Taxonomy" id="315456"/>
    <lineage>
        <taxon>Bacteria</taxon>
        <taxon>Pseudomonadati</taxon>
        <taxon>Pseudomonadota</taxon>
        <taxon>Alphaproteobacteria</taxon>
        <taxon>Rickettsiales</taxon>
        <taxon>Rickettsiaceae</taxon>
        <taxon>Rickettsieae</taxon>
        <taxon>Rickettsia</taxon>
        <taxon>spotted fever group</taxon>
    </lineage>
</organism>
<gene>
    <name evidence="1" type="primary">rpsS</name>
    <name type="ordered locus">RF_0282</name>
</gene>
<keyword id="KW-0687">Ribonucleoprotein</keyword>
<keyword id="KW-0689">Ribosomal protein</keyword>
<keyword id="KW-0694">RNA-binding</keyword>
<keyword id="KW-0699">rRNA-binding</keyword>
<comment type="function">
    <text evidence="1">Protein S19 forms a complex with S13 that binds strongly to the 16S ribosomal RNA.</text>
</comment>
<comment type="similarity">
    <text evidence="1">Belongs to the universal ribosomal protein uS19 family.</text>
</comment>
<accession>Q4UMS5</accession>